<name>CPFC_GEOKA</name>
<protein>
    <recommendedName>
        <fullName evidence="1">Coproporphyrin III ferrochelatase</fullName>
        <ecNumber evidence="1">4.99.1.9</ecNumber>
    </recommendedName>
</protein>
<accession>Q5L283</accession>
<keyword id="KW-0963">Cytoplasm</keyword>
<keyword id="KW-0350">Heme biosynthesis</keyword>
<keyword id="KW-0408">Iron</keyword>
<keyword id="KW-0456">Lyase</keyword>
<keyword id="KW-0479">Metal-binding</keyword>
<keyword id="KW-0627">Porphyrin biosynthesis</keyword>
<keyword id="KW-1185">Reference proteome</keyword>
<organism>
    <name type="scientific">Geobacillus kaustophilus (strain HTA426)</name>
    <dbReference type="NCBI Taxonomy" id="235909"/>
    <lineage>
        <taxon>Bacteria</taxon>
        <taxon>Bacillati</taxon>
        <taxon>Bacillota</taxon>
        <taxon>Bacilli</taxon>
        <taxon>Bacillales</taxon>
        <taxon>Anoxybacillaceae</taxon>
        <taxon>Geobacillus</taxon>
        <taxon>Geobacillus thermoleovorans group</taxon>
    </lineage>
</organism>
<evidence type="ECO:0000255" key="1">
    <source>
        <dbReference type="HAMAP-Rule" id="MF_00323"/>
    </source>
</evidence>
<comment type="function">
    <text evidence="1">Involved in coproporphyrin-dependent heme b biosynthesis. Catalyzes the insertion of ferrous iron into coproporphyrin III to form Fe-coproporphyrin III.</text>
</comment>
<comment type="catalytic activity">
    <reaction evidence="1">
        <text>Fe-coproporphyrin III + 2 H(+) = coproporphyrin III + Fe(2+)</text>
        <dbReference type="Rhea" id="RHEA:49572"/>
        <dbReference type="ChEBI" id="CHEBI:15378"/>
        <dbReference type="ChEBI" id="CHEBI:29033"/>
        <dbReference type="ChEBI" id="CHEBI:68438"/>
        <dbReference type="ChEBI" id="CHEBI:131725"/>
        <dbReference type="EC" id="4.99.1.9"/>
    </reaction>
    <physiologicalReaction direction="right-to-left" evidence="1">
        <dbReference type="Rhea" id="RHEA:49574"/>
    </physiologicalReaction>
</comment>
<comment type="pathway">
    <text evidence="1">Porphyrin-containing compound metabolism; protoheme biosynthesis.</text>
</comment>
<comment type="subcellular location">
    <subcellularLocation>
        <location evidence="1">Cytoplasm</location>
    </subcellularLocation>
</comment>
<comment type="similarity">
    <text evidence="1">Belongs to the ferrochelatase family.</text>
</comment>
<feature type="chain" id="PRO_0000175144" description="Coproporphyrin III ferrochelatase">
    <location>
        <begin position="1"/>
        <end position="316"/>
    </location>
</feature>
<feature type="binding site" description="axial binding residue" evidence="1">
    <location>
        <position position="13"/>
    </location>
    <ligand>
        <name>Fe-coproporphyrin III</name>
        <dbReference type="ChEBI" id="CHEBI:68438"/>
    </ligand>
    <ligandPart>
        <name>Fe</name>
        <dbReference type="ChEBI" id="CHEBI:18248"/>
    </ligandPart>
</feature>
<feature type="binding site" evidence="1">
    <location>
        <position position="30"/>
    </location>
    <ligand>
        <name>Fe-coproporphyrin III</name>
        <dbReference type="ChEBI" id="CHEBI:68438"/>
    </ligand>
</feature>
<feature type="binding site" evidence="1">
    <location>
        <begin position="46"/>
        <end position="47"/>
    </location>
    <ligand>
        <name>Fe-coproporphyrin III</name>
        <dbReference type="ChEBI" id="CHEBI:68438"/>
    </ligand>
</feature>
<feature type="binding site" evidence="1">
    <location>
        <position position="54"/>
    </location>
    <ligand>
        <name>Fe-coproporphyrin III</name>
        <dbReference type="ChEBI" id="CHEBI:68438"/>
    </ligand>
</feature>
<feature type="binding site" evidence="1">
    <location>
        <position position="125"/>
    </location>
    <ligand>
        <name>Fe-coproporphyrin III</name>
        <dbReference type="ChEBI" id="CHEBI:68438"/>
    </ligand>
</feature>
<feature type="binding site" evidence="1">
    <location>
        <position position="183"/>
    </location>
    <ligand>
        <name>Fe(2+)</name>
        <dbReference type="ChEBI" id="CHEBI:29033"/>
    </ligand>
</feature>
<feature type="binding site" evidence="1">
    <location>
        <position position="264"/>
    </location>
    <ligand>
        <name>Fe(2+)</name>
        <dbReference type="ChEBI" id="CHEBI:29033"/>
    </ligand>
</feature>
<proteinExistence type="inferred from homology"/>
<reference key="1">
    <citation type="journal article" date="2004" name="Nucleic Acids Res.">
        <title>Thermoadaptation trait revealed by the genome sequence of thermophilic Geobacillus kaustophilus.</title>
        <authorList>
            <person name="Takami H."/>
            <person name="Takaki Y."/>
            <person name="Chee G.-J."/>
            <person name="Nishi S."/>
            <person name="Shimamura S."/>
            <person name="Suzuki H."/>
            <person name="Matsui S."/>
            <person name="Uchiyama I."/>
        </authorList>
    </citation>
    <scope>NUCLEOTIDE SEQUENCE [LARGE SCALE GENOMIC DNA]</scope>
    <source>
        <strain>HTA426</strain>
    </source>
</reference>
<dbReference type="EC" id="4.99.1.9" evidence="1"/>
<dbReference type="EMBL" id="BA000043">
    <property type="protein sequence ID" value="BAD74947.1"/>
    <property type="molecule type" value="Genomic_DNA"/>
</dbReference>
<dbReference type="SMR" id="Q5L283"/>
<dbReference type="STRING" id="235909.GK0662"/>
<dbReference type="KEGG" id="gka:GK0662"/>
<dbReference type="eggNOG" id="COG0276">
    <property type="taxonomic scope" value="Bacteria"/>
</dbReference>
<dbReference type="HOGENOM" id="CLU_018884_2_1_9"/>
<dbReference type="UniPathway" id="UPA00252"/>
<dbReference type="Proteomes" id="UP000001172">
    <property type="component" value="Chromosome"/>
</dbReference>
<dbReference type="GO" id="GO:0005737">
    <property type="term" value="C:cytoplasm"/>
    <property type="evidence" value="ECO:0007669"/>
    <property type="project" value="UniProtKB-SubCell"/>
</dbReference>
<dbReference type="GO" id="GO:0004325">
    <property type="term" value="F:ferrochelatase activity"/>
    <property type="evidence" value="ECO:0007669"/>
    <property type="project" value="UniProtKB-UniRule"/>
</dbReference>
<dbReference type="GO" id="GO:0046872">
    <property type="term" value="F:metal ion binding"/>
    <property type="evidence" value="ECO:0007669"/>
    <property type="project" value="UniProtKB-KW"/>
</dbReference>
<dbReference type="GO" id="GO:0006783">
    <property type="term" value="P:heme biosynthetic process"/>
    <property type="evidence" value="ECO:0007669"/>
    <property type="project" value="UniProtKB-UniRule"/>
</dbReference>
<dbReference type="CDD" id="cd00419">
    <property type="entry name" value="Ferrochelatase_C"/>
    <property type="match status" value="1"/>
</dbReference>
<dbReference type="CDD" id="cd03411">
    <property type="entry name" value="Ferrochelatase_N"/>
    <property type="match status" value="1"/>
</dbReference>
<dbReference type="FunFam" id="3.40.50.1400:FF:000009">
    <property type="entry name" value="Ferrochelatase"/>
    <property type="match status" value="1"/>
</dbReference>
<dbReference type="Gene3D" id="3.40.50.1400">
    <property type="match status" value="2"/>
</dbReference>
<dbReference type="HAMAP" id="MF_00323">
    <property type="entry name" value="Ferrochelatase"/>
    <property type="match status" value="1"/>
</dbReference>
<dbReference type="InterPro" id="IPR001015">
    <property type="entry name" value="Ferrochelatase"/>
</dbReference>
<dbReference type="InterPro" id="IPR019772">
    <property type="entry name" value="Ferrochelatase_AS"/>
</dbReference>
<dbReference type="InterPro" id="IPR033644">
    <property type="entry name" value="Ferrochelatase_C"/>
</dbReference>
<dbReference type="InterPro" id="IPR033659">
    <property type="entry name" value="Ferrochelatase_N"/>
</dbReference>
<dbReference type="NCBIfam" id="TIGR00109">
    <property type="entry name" value="hemH"/>
    <property type="match status" value="1"/>
</dbReference>
<dbReference type="NCBIfam" id="NF009095">
    <property type="entry name" value="PRK12435.1"/>
    <property type="match status" value="1"/>
</dbReference>
<dbReference type="PANTHER" id="PTHR11108">
    <property type="entry name" value="FERROCHELATASE"/>
    <property type="match status" value="1"/>
</dbReference>
<dbReference type="PANTHER" id="PTHR11108:SF1">
    <property type="entry name" value="FERROCHELATASE, MITOCHONDRIAL"/>
    <property type="match status" value="1"/>
</dbReference>
<dbReference type="Pfam" id="PF00762">
    <property type="entry name" value="Ferrochelatase"/>
    <property type="match status" value="1"/>
</dbReference>
<dbReference type="SUPFAM" id="SSF53800">
    <property type="entry name" value="Chelatase"/>
    <property type="match status" value="1"/>
</dbReference>
<dbReference type="PROSITE" id="PS00534">
    <property type="entry name" value="FERROCHELATASE"/>
    <property type="match status" value="1"/>
</dbReference>
<gene>
    <name evidence="1" type="primary">cpfC</name>
    <name type="ordered locus">GK0662</name>
</gene>
<sequence>MVKKTAGLLVMAYGTPYREDDIERYYTHIRHGRKPPQEQIEDLKARYRAIGGLSPLAKITEEQAKRLEERLNEVQDEVEFRMYLGLKHIEPFIEDAVERMHDDGIKEAVGIVLAPHYSTFSIRSYNERAKAAAKKLGGPTIYTIDQWYDEPKFLQYWAEQVRAIFAAMPERERERAVLIVSAHSLPEKIIQAGDPYPTQLEDTAKRIADQAGVAHYAVGWQSAGQTPEPWLGPDVQDLTRQLYEERGYTSFVYAPVGFVADHLEVLYDNDIECKQVTEEIGARYYRPEMPNTNPLFIDALASVVLKRWAEEGDRHE</sequence>